<dbReference type="EC" id="2.8.4.4" evidence="1"/>
<dbReference type="EMBL" id="CU234118">
    <property type="protein sequence ID" value="CAL77559.1"/>
    <property type="molecule type" value="Genomic_DNA"/>
</dbReference>
<dbReference type="RefSeq" id="WP_011926698.1">
    <property type="nucleotide sequence ID" value="NC_009445.1"/>
</dbReference>
<dbReference type="SMR" id="A4YUI3"/>
<dbReference type="STRING" id="114615.BRADO3790"/>
<dbReference type="KEGG" id="bra:BRADO3790"/>
<dbReference type="eggNOG" id="COG0621">
    <property type="taxonomic scope" value="Bacteria"/>
</dbReference>
<dbReference type="HOGENOM" id="CLU_018697_0_0_5"/>
<dbReference type="OrthoDB" id="9805215at2"/>
<dbReference type="Proteomes" id="UP000001994">
    <property type="component" value="Chromosome"/>
</dbReference>
<dbReference type="GO" id="GO:0005829">
    <property type="term" value="C:cytosol"/>
    <property type="evidence" value="ECO:0007669"/>
    <property type="project" value="TreeGrafter"/>
</dbReference>
<dbReference type="GO" id="GO:0051539">
    <property type="term" value="F:4 iron, 4 sulfur cluster binding"/>
    <property type="evidence" value="ECO:0007669"/>
    <property type="project" value="UniProtKB-UniRule"/>
</dbReference>
<dbReference type="GO" id="GO:0035599">
    <property type="term" value="F:aspartic acid methylthiotransferase activity"/>
    <property type="evidence" value="ECO:0007669"/>
    <property type="project" value="TreeGrafter"/>
</dbReference>
<dbReference type="GO" id="GO:0046872">
    <property type="term" value="F:metal ion binding"/>
    <property type="evidence" value="ECO:0007669"/>
    <property type="project" value="UniProtKB-KW"/>
</dbReference>
<dbReference type="GO" id="GO:0103039">
    <property type="term" value="F:protein methylthiotransferase activity"/>
    <property type="evidence" value="ECO:0007669"/>
    <property type="project" value="UniProtKB-EC"/>
</dbReference>
<dbReference type="GO" id="GO:0006400">
    <property type="term" value="P:tRNA modification"/>
    <property type="evidence" value="ECO:0007669"/>
    <property type="project" value="InterPro"/>
</dbReference>
<dbReference type="CDD" id="cd01335">
    <property type="entry name" value="Radical_SAM"/>
    <property type="match status" value="1"/>
</dbReference>
<dbReference type="FunFam" id="2.40.50.140:FF:000060">
    <property type="entry name" value="Ribosomal protein S12 methylthiotransferase RimO"/>
    <property type="match status" value="1"/>
</dbReference>
<dbReference type="FunFam" id="3.40.50.12160:FF:000002">
    <property type="entry name" value="Ribosomal protein S12 methylthiotransferase RimO"/>
    <property type="match status" value="1"/>
</dbReference>
<dbReference type="FunFam" id="3.80.30.20:FF:000001">
    <property type="entry name" value="tRNA-2-methylthio-N(6)-dimethylallyladenosine synthase 2"/>
    <property type="match status" value="1"/>
</dbReference>
<dbReference type="Gene3D" id="3.40.50.12160">
    <property type="entry name" value="Methylthiotransferase, N-terminal domain"/>
    <property type="match status" value="1"/>
</dbReference>
<dbReference type="Gene3D" id="2.40.50.140">
    <property type="entry name" value="Nucleic acid-binding proteins"/>
    <property type="match status" value="1"/>
</dbReference>
<dbReference type="Gene3D" id="3.80.30.20">
    <property type="entry name" value="tm_1862 like domain"/>
    <property type="match status" value="1"/>
</dbReference>
<dbReference type="HAMAP" id="MF_01865">
    <property type="entry name" value="MTTase_RimO"/>
    <property type="match status" value="1"/>
</dbReference>
<dbReference type="InterPro" id="IPR006638">
    <property type="entry name" value="Elp3/MiaA/NifB-like_rSAM"/>
</dbReference>
<dbReference type="InterPro" id="IPR005839">
    <property type="entry name" value="Methylthiotransferase"/>
</dbReference>
<dbReference type="InterPro" id="IPR020612">
    <property type="entry name" value="Methylthiotransferase_CS"/>
</dbReference>
<dbReference type="InterPro" id="IPR013848">
    <property type="entry name" value="Methylthiotransferase_N"/>
</dbReference>
<dbReference type="InterPro" id="IPR038135">
    <property type="entry name" value="Methylthiotransferase_N_sf"/>
</dbReference>
<dbReference type="InterPro" id="IPR012340">
    <property type="entry name" value="NA-bd_OB-fold"/>
</dbReference>
<dbReference type="InterPro" id="IPR005840">
    <property type="entry name" value="Ribosomal_uS12_MeSTrfase_RimO"/>
</dbReference>
<dbReference type="InterPro" id="IPR007197">
    <property type="entry name" value="rSAM"/>
</dbReference>
<dbReference type="InterPro" id="IPR023404">
    <property type="entry name" value="rSAM_horseshoe"/>
</dbReference>
<dbReference type="InterPro" id="IPR002792">
    <property type="entry name" value="TRAM_dom"/>
</dbReference>
<dbReference type="NCBIfam" id="TIGR01125">
    <property type="entry name" value="30S ribosomal protein S12 methylthiotransferase RimO"/>
    <property type="match status" value="1"/>
</dbReference>
<dbReference type="NCBIfam" id="TIGR00089">
    <property type="entry name" value="MiaB/RimO family radical SAM methylthiotransferase"/>
    <property type="match status" value="1"/>
</dbReference>
<dbReference type="PANTHER" id="PTHR43837">
    <property type="entry name" value="RIBOSOMAL PROTEIN S12 METHYLTHIOTRANSFERASE RIMO"/>
    <property type="match status" value="1"/>
</dbReference>
<dbReference type="PANTHER" id="PTHR43837:SF1">
    <property type="entry name" value="RIBOSOMAL PROTEIN US12 METHYLTHIOTRANSFERASE RIMO"/>
    <property type="match status" value="1"/>
</dbReference>
<dbReference type="Pfam" id="PF04055">
    <property type="entry name" value="Radical_SAM"/>
    <property type="match status" value="1"/>
</dbReference>
<dbReference type="Pfam" id="PF18693">
    <property type="entry name" value="TRAM_2"/>
    <property type="match status" value="1"/>
</dbReference>
<dbReference type="Pfam" id="PF00919">
    <property type="entry name" value="UPF0004"/>
    <property type="match status" value="1"/>
</dbReference>
<dbReference type="SFLD" id="SFLDG01082">
    <property type="entry name" value="B12-binding_domain_containing"/>
    <property type="match status" value="1"/>
</dbReference>
<dbReference type="SFLD" id="SFLDS00029">
    <property type="entry name" value="Radical_SAM"/>
    <property type="match status" value="1"/>
</dbReference>
<dbReference type="SFLD" id="SFLDF00274">
    <property type="entry name" value="ribosomal_protein_S12_methylth"/>
    <property type="match status" value="1"/>
</dbReference>
<dbReference type="SMART" id="SM00729">
    <property type="entry name" value="Elp3"/>
    <property type="match status" value="1"/>
</dbReference>
<dbReference type="SUPFAM" id="SSF102114">
    <property type="entry name" value="Radical SAM enzymes"/>
    <property type="match status" value="1"/>
</dbReference>
<dbReference type="PROSITE" id="PS51449">
    <property type="entry name" value="MTTASE_N"/>
    <property type="match status" value="1"/>
</dbReference>
<dbReference type="PROSITE" id="PS01278">
    <property type="entry name" value="MTTASE_RADICAL"/>
    <property type="match status" value="1"/>
</dbReference>
<dbReference type="PROSITE" id="PS51918">
    <property type="entry name" value="RADICAL_SAM"/>
    <property type="match status" value="1"/>
</dbReference>
<dbReference type="PROSITE" id="PS50926">
    <property type="entry name" value="TRAM"/>
    <property type="match status" value="1"/>
</dbReference>
<proteinExistence type="inferred from homology"/>
<evidence type="ECO:0000255" key="1">
    <source>
        <dbReference type="HAMAP-Rule" id="MF_01865"/>
    </source>
</evidence>
<evidence type="ECO:0000255" key="2">
    <source>
        <dbReference type="PROSITE-ProRule" id="PRU01266"/>
    </source>
</evidence>
<feature type="chain" id="PRO_0000374719" description="Ribosomal protein uS12 methylthiotransferase RimO">
    <location>
        <begin position="1"/>
        <end position="445"/>
    </location>
</feature>
<feature type="domain" description="MTTase N-terminal" evidence="1">
    <location>
        <begin position="11"/>
        <end position="121"/>
    </location>
</feature>
<feature type="domain" description="Radical SAM core" evidence="2">
    <location>
        <begin position="138"/>
        <end position="375"/>
    </location>
</feature>
<feature type="domain" description="TRAM" evidence="1">
    <location>
        <begin position="378"/>
        <end position="444"/>
    </location>
</feature>
<feature type="binding site" evidence="1">
    <location>
        <position position="20"/>
    </location>
    <ligand>
        <name>[4Fe-4S] cluster</name>
        <dbReference type="ChEBI" id="CHEBI:49883"/>
        <label>1</label>
    </ligand>
</feature>
<feature type="binding site" evidence="1">
    <location>
        <position position="56"/>
    </location>
    <ligand>
        <name>[4Fe-4S] cluster</name>
        <dbReference type="ChEBI" id="CHEBI:49883"/>
        <label>1</label>
    </ligand>
</feature>
<feature type="binding site" evidence="1">
    <location>
        <position position="85"/>
    </location>
    <ligand>
        <name>[4Fe-4S] cluster</name>
        <dbReference type="ChEBI" id="CHEBI:49883"/>
        <label>1</label>
    </ligand>
</feature>
<feature type="binding site" evidence="1">
    <location>
        <position position="152"/>
    </location>
    <ligand>
        <name>[4Fe-4S] cluster</name>
        <dbReference type="ChEBI" id="CHEBI:49883"/>
        <label>2</label>
        <note>4Fe-4S-S-AdoMet</note>
    </ligand>
</feature>
<feature type="binding site" evidence="1">
    <location>
        <position position="156"/>
    </location>
    <ligand>
        <name>[4Fe-4S] cluster</name>
        <dbReference type="ChEBI" id="CHEBI:49883"/>
        <label>2</label>
        <note>4Fe-4S-S-AdoMet</note>
    </ligand>
</feature>
<feature type="binding site" evidence="1">
    <location>
        <position position="159"/>
    </location>
    <ligand>
        <name>[4Fe-4S] cluster</name>
        <dbReference type="ChEBI" id="CHEBI:49883"/>
        <label>2</label>
        <note>4Fe-4S-S-AdoMet</note>
    </ligand>
</feature>
<reference key="1">
    <citation type="journal article" date="2007" name="Science">
        <title>Legumes symbioses: absence of nod genes in photosynthetic bradyrhizobia.</title>
        <authorList>
            <person name="Giraud E."/>
            <person name="Moulin L."/>
            <person name="Vallenet D."/>
            <person name="Barbe V."/>
            <person name="Cytryn E."/>
            <person name="Avarre J.-C."/>
            <person name="Jaubert M."/>
            <person name="Simon D."/>
            <person name="Cartieaux F."/>
            <person name="Prin Y."/>
            <person name="Bena G."/>
            <person name="Hannibal L."/>
            <person name="Fardoux J."/>
            <person name="Kojadinovic M."/>
            <person name="Vuillet L."/>
            <person name="Lajus A."/>
            <person name="Cruveiller S."/>
            <person name="Rouy Z."/>
            <person name="Mangenot S."/>
            <person name="Segurens B."/>
            <person name="Dossat C."/>
            <person name="Franck W.L."/>
            <person name="Chang W.-S."/>
            <person name="Saunders E."/>
            <person name="Bruce D."/>
            <person name="Richardson P."/>
            <person name="Normand P."/>
            <person name="Dreyfus B."/>
            <person name="Pignol D."/>
            <person name="Stacey G."/>
            <person name="Emerich D."/>
            <person name="Vermeglio A."/>
            <person name="Medigue C."/>
            <person name="Sadowsky M."/>
        </authorList>
    </citation>
    <scope>NUCLEOTIDE SEQUENCE [LARGE SCALE GENOMIC DNA]</scope>
    <source>
        <strain>ORS 278</strain>
    </source>
</reference>
<keyword id="KW-0004">4Fe-4S</keyword>
<keyword id="KW-0963">Cytoplasm</keyword>
<keyword id="KW-0408">Iron</keyword>
<keyword id="KW-0411">Iron-sulfur</keyword>
<keyword id="KW-0479">Metal-binding</keyword>
<keyword id="KW-1185">Reference proteome</keyword>
<keyword id="KW-0949">S-adenosyl-L-methionine</keyword>
<keyword id="KW-0808">Transferase</keyword>
<organism>
    <name type="scientific">Bradyrhizobium sp. (strain ORS 278)</name>
    <dbReference type="NCBI Taxonomy" id="114615"/>
    <lineage>
        <taxon>Bacteria</taxon>
        <taxon>Pseudomonadati</taxon>
        <taxon>Pseudomonadota</taxon>
        <taxon>Alphaproteobacteria</taxon>
        <taxon>Hyphomicrobiales</taxon>
        <taxon>Nitrobacteraceae</taxon>
        <taxon>Bradyrhizobium</taxon>
    </lineage>
</organism>
<comment type="function">
    <text evidence="1">Catalyzes the methylthiolation of an aspartic acid residue of ribosomal protein uS12.</text>
</comment>
<comment type="catalytic activity">
    <reaction evidence="1">
        <text>L-aspartate(89)-[ribosomal protein uS12]-hydrogen + (sulfur carrier)-SH + AH2 + 2 S-adenosyl-L-methionine = 3-methylsulfanyl-L-aspartate(89)-[ribosomal protein uS12]-hydrogen + (sulfur carrier)-H + 5'-deoxyadenosine + L-methionine + A + S-adenosyl-L-homocysteine + 2 H(+)</text>
        <dbReference type="Rhea" id="RHEA:37087"/>
        <dbReference type="Rhea" id="RHEA-COMP:10460"/>
        <dbReference type="Rhea" id="RHEA-COMP:10461"/>
        <dbReference type="Rhea" id="RHEA-COMP:14737"/>
        <dbReference type="Rhea" id="RHEA-COMP:14739"/>
        <dbReference type="ChEBI" id="CHEBI:13193"/>
        <dbReference type="ChEBI" id="CHEBI:15378"/>
        <dbReference type="ChEBI" id="CHEBI:17319"/>
        <dbReference type="ChEBI" id="CHEBI:17499"/>
        <dbReference type="ChEBI" id="CHEBI:29917"/>
        <dbReference type="ChEBI" id="CHEBI:29961"/>
        <dbReference type="ChEBI" id="CHEBI:57844"/>
        <dbReference type="ChEBI" id="CHEBI:57856"/>
        <dbReference type="ChEBI" id="CHEBI:59789"/>
        <dbReference type="ChEBI" id="CHEBI:64428"/>
        <dbReference type="ChEBI" id="CHEBI:73599"/>
        <dbReference type="EC" id="2.8.4.4"/>
    </reaction>
</comment>
<comment type="cofactor">
    <cofactor evidence="1">
        <name>[4Fe-4S] cluster</name>
        <dbReference type="ChEBI" id="CHEBI:49883"/>
    </cofactor>
    <text evidence="1">Binds 2 [4Fe-4S] clusters. One cluster is coordinated with 3 cysteines and an exchangeable S-adenosyl-L-methionine.</text>
</comment>
<comment type="subcellular location">
    <subcellularLocation>
        <location evidence="1">Cytoplasm</location>
    </subcellularLocation>
</comment>
<comment type="similarity">
    <text evidence="1">Belongs to the methylthiotransferase family. RimO subfamily.</text>
</comment>
<sequence length="445" mass="48932">MQQGSAPNSAPKISFVSLGCPKALVDSERIITRLRAEGYELARKHDGADVVIVNTCGFLDSAKQESLAAIGSAMAENGKVIVTGCMGAEPEQIEQAYPGVLSITGPQQYESVLDAVHRASPPVHNPHLDLVPPQGIKLTPRHYAYLKISEGCNNRCSFCIIPKLRGDLVSRPAADVLREAERLVAAGVKELLVISQDTSAYGLDIKYAESPWKDRSVRARFLDLARELGELGAWVRLHYVYPYPHVDEVIGLMTDGKVLPYLDIPFQHASPNVLKAMRRPAAQDKTLDRIKAWRGACPDLALRSTFIVGFPGETDEDFAYLLDWLDEAEIDRLGCFKYEPVAGATSNALPGQVPDEVKQERWNALMARQQKISARRLKRKVGTRQQIIIDEVGPTVAKGRSKADAPEIDGAVYLSSRRPLRAGEIVTAKIERADEYDLHGTVAGF</sequence>
<protein>
    <recommendedName>
        <fullName evidence="1">Ribosomal protein uS12 methylthiotransferase RimO</fullName>
        <shortName evidence="1">uS12 MTTase</shortName>
        <shortName evidence="1">uS12 methylthiotransferase</shortName>
        <ecNumber evidence="1">2.8.4.4</ecNumber>
    </recommendedName>
    <alternativeName>
        <fullName evidence="1">Ribosomal protein uS12 (aspartate-C(3))-methylthiotransferase</fullName>
    </alternativeName>
    <alternativeName>
        <fullName evidence="1">Ribosome maturation factor RimO</fullName>
    </alternativeName>
</protein>
<gene>
    <name evidence="1" type="primary">rimO</name>
    <name type="ordered locus">BRADO3790</name>
</gene>
<accession>A4YUI3</accession>
<name>RIMO_BRASO</name>